<proteinExistence type="inferred from homology"/>
<evidence type="ECO:0000255" key="1">
    <source>
        <dbReference type="HAMAP-Rule" id="MF_00169"/>
    </source>
</evidence>
<gene>
    <name evidence="1" type="primary">aroQ</name>
    <name type="ordered locus">Gmet_0981</name>
</gene>
<feature type="chain" id="PRO_1000023467" description="3-dehydroquinate dehydratase">
    <location>
        <begin position="1"/>
        <end position="150"/>
    </location>
</feature>
<feature type="active site" description="Proton acceptor" evidence="1">
    <location>
        <position position="22"/>
    </location>
</feature>
<feature type="active site" description="Proton donor" evidence="1">
    <location>
        <position position="99"/>
    </location>
</feature>
<feature type="binding site" evidence="1">
    <location>
        <position position="73"/>
    </location>
    <ligand>
        <name>substrate</name>
    </ligand>
</feature>
<feature type="binding site" evidence="1">
    <location>
        <position position="79"/>
    </location>
    <ligand>
        <name>substrate</name>
    </ligand>
</feature>
<feature type="binding site" evidence="1">
    <location>
        <position position="86"/>
    </location>
    <ligand>
        <name>substrate</name>
    </ligand>
</feature>
<feature type="binding site" evidence="1">
    <location>
        <begin position="100"/>
        <end position="101"/>
    </location>
    <ligand>
        <name>substrate</name>
    </ligand>
</feature>
<feature type="binding site" evidence="1">
    <location>
        <position position="110"/>
    </location>
    <ligand>
        <name>substrate</name>
    </ligand>
</feature>
<feature type="site" description="Transition state stabilizer" evidence="1">
    <location>
        <position position="17"/>
    </location>
</feature>
<accession>Q39X01</accession>
<keyword id="KW-0028">Amino-acid biosynthesis</keyword>
<keyword id="KW-0057">Aromatic amino acid biosynthesis</keyword>
<keyword id="KW-0456">Lyase</keyword>
<keyword id="KW-1185">Reference proteome</keyword>
<protein>
    <recommendedName>
        <fullName evidence="1">3-dehydroquinate dehydratase</fullName>
        <shortName evidence="1">3-dehydroquinase</shortName>
        <ecNumber evidence="1">4.2.1.10</ecNumber>
    </recommendedName>
    <alternativeName>
        <fullName evidence="1">Type II DHQase</fullName>
    </alternativeName>
</protein>
<reference key="1">
    <citation type="journal article" date="2009" name="BMC Microbiol.">
        <title>The genome sequence of Geobacter metallireducens: features of metabolism, physiology and regulation common and dissimilar to Geobacter sulfurreducens.</title>
        <authorList>
            <person name="Aklujkar M."/>
            <person name="Krushkal J."/>
            <person name="DiBartolo G."/>
            <person name="Lapidus A."/>
            <person name="Land M.L."/>
            <person name="Lovley D.R."/>
        </authorList>
    </citation>
    <scope>NUCLEOTIDE SEQUENCE [LARGE SCALE GENOMIC DNA]</scope>
    <source>
        <strain>ATCC 53774 / DSM 7210 / GS-15</strain>
    </source>
</reference>
<comment type="function">
    <text evidence="1">Catalyzes a trans-dehydration via an enolate intermediate.</text>
</comment>
<comment type="catalytic activity">
    <reaction evidence="1">
        <text>3-dehydroquinate = 3-dehydroshikimate + H2O</text>
        <dbReference type="Rhea" id="RHEA:21096"/>
        <dbReference type="ChEBI" id="CHEBI:15377"/>
        <dbReference type="ChEBI" id="CHEBI:16630"/>
        <dbReference type="ChEBI" id="CHEBI:32364"/>
        <dbReference type="EC" id="4.2.1.10"/>
    </reaction>
</comment>
<comment type="pathway">
    <text evidence="1">Metabolic intermediate biosynthesis; chorismate biosynthesis; chorismate from D-erythrose 4-phosphate and phosphoenolpyruvate: step 3/7.</text>
</comment>
<comment type="subunit">
    <text evidence="1">Homododecamer.</text>
</comment>
<comment type="similarity">
    <text evidence="1">Belongs to the type-II 3-dehydroquinase family.</text>
</comment>
<organism>
    <name type="scientific">Geobacter metallireducens (strain ATCC 53774 / DSM 7210 / GS-15)</name>
    <dbReference type="NCBI Taxonomy" id="269799"/>
    <lineage>
        <taxon>Bacteria</taxon>
        <taxon>Pseudomonadati</taxon>
        <taxon>Thermodesulfobacteriota</taxon>
        <taxon>Desulfuromonadia</taxon>
        <taxon>Geobacterales</taxon>
        <taxon>Geobacteraceae</taxon>
        <taxon>Geobacter</taxon>
    </lineage>
</organism>
<sequence length="150" mass="16067">MNVLVVHGPNLNLLGTREPGIYGVLTLDRINEEISALAEELGCSVSFFQSNSEGAIIDAIQQACGACDGILINPAAYTHTSVAIRDALAAVALPVVEVHLSNIHRREEFRHHSFIAPVAVGQIAGFGADSYLLGLRALFTYIKKEIVTKA</sequence>
<name>AROQ_GEOMG</name>
<dbReference type="EC" id="4.2.1.10" evidence="1"/>
<dbReference type="EMBL" id="CP000148">
    <property type="protein sequence ID" value="ABB31223.1"/>
    <property type="molecule type" value="Genomic_DNA"/>
</dbReference>
<dbReference type="RefSeq" id="WP_004514376.1">
    <property type="nucleotide sequence ID" value="NC_007517.1"/>
</dbReference>
<dbReference type="SMR" id="Q39X01"/>
<dbReference type="STRING" id="269799.Gmet_0981"/>
<dbReference type="KEGG" id="gme:Gmet_0981"/>
<dbReference type="eggNOG" id="COG0757">
    <property type="taxonomic scope" value="Bacteria"/>
</dbReference>
<dbReference type="HOGENOM" id="CLU_090968_1_0_7"/>
<dbReference type="UniPathway" id="UPA00053">
    <property type="reaction ID" value="UER00086"/>
</dbReference>
<dbReference type="Proteomes" id="UP000007073">
    <property type="component" value="Chromosome"/>
</dbReference>
<dbReference type="GO" id="GO:0003855">
    <property type="term" value="F:3-dehydroquinate dehydratase activity"/>
    <property type="evidence" value="ECO:0007669"/>
    <property type="project" value="UniProtKB-UniRule"/>
</dbReference>
<dbReference type="GO" id="GO:0008652">
    <property type="term" value="P:amino acid biosynthetic process"/>
    <property type="evidence" value="ECO:0007669"/>
    <property type="project" value="UniProtKB-KW"/>
</dbReference>
<dbReference type="GO" id="GO:0009073">
    <property type="term" value="P:aromatic amino acid family biosynthetic process"/>
    <property type="evidence" value="ECO:0007669"/>
    <property type="project" value="UniProtKB-KW"/>
</dbReference>
<dbReference type="GO" id="GO:0009423">
    <property type="term" value="P:chorismate biosynthetic process"/>
    <property type="evidence" value="ECO:0007669"/>
    <property type="project" value="UniProtKB-UniRule"/>
</dbReference>
<dbReference type="GO" id="GO:0019631">
    <property type="term" value="P:quinate catabolic process"/>
    <property type="evidence" value="ECO:0007669"/>
    <property type="project" value="TreeGrafter"/>
</dbReference>
<dbReference type="CDD" id="cd00466">
    <property type="entry name" value="DHQase_II"/>
    <property type="match status" value="1"/>
</dbReference>
<dbReference type="Gene3D" id="3.40.50.9100">
    <property type="entry name" value="Dehydroquinase, class II"/>
    <property type="match status" value="1"/>
</dbReference>
<dbReference type="HAMAP" id="MF_00169">
    <property type="entry name" value="AroQ"/>
    <property type="match status" value="1"/>
</dbReference>
<dbReference type="InterPro" id="IPR001874">
    <property type="entry name" value="DHquinase_II"/>
</dbReference>
<dbReference type="InterPro" id="IPR018509">
    <property type="entry name" value="DHquinase_II_CS"/>
</dbReference>
<dbReference type="InterPro" id="IPR036441">
    <property type="entry name" value="DHquinase_II_sf"/>
</dbReference>
<dbReference type="NCBIfam" id="TIGR01088">
    <property type="entry name" value="aroQ"/>
    <property type="match status" value="1"/>
</dbReference>
<dbReference type="NCBIfam" id="NF003804">
    <property type="entry name" value="PRK05395.1-1"/>
    <property type="match status" value="1"/>
</dbReference>
<dbReference type="NCBIfam" id="NF003805">
    <property type="entry name" value="PRK05395.1-2"/>
    <property type="match status" value="1"/>
</dbReference>
<dbReference type="NCBIfam" id="NF003806">
    <property type="entry name" value="PRK05395.1-3"/>
    <property type="match status" value="1"/>
</dbReference>
<dbReference type="NCBIfam" id="NF003807">
    <property type="entry name" value="PRK05395.1-4"/>
    <property type="match status" value="1"/>
</dbReference>
<dbReference type="PANTHER" id="PTHR21272">
    <property type="entry name" value="CATABOLIC 3-DEHYDROQUINASE"/>
    <property type="match status" value="1"/>
</dbReference>
<dbReference type="PANTHER" id="PTHR21272:SF3">
    <property type="entry name" value="CATABOLIC 3-DEHYDROQUINASE"/>
    <property type="match status" value="1"/>
</dbReference>
<dbReference type="Pfam" id="PF01220">
    <property type="entry name" value="DHquinase_II"/>
    <property type="match status" value="1"/>
</dbReference>
<dbReference type="PIRSF" id="PIRSF001399">
    <property type="entry name" value="DHquinase_II"/>
    <property type="match status" value="1"/>
</dbReference>
<dbReference type="SUPFAM" id="SSF52304">
    <property type="entry name" value="Type II 3-dehydroquinate dehydratase"/>
    <property type="match status" value="1"/>
</dbReference>
<dbReference type="PROSITE" id="PS01029">
    <property type="entry name" value="DEHYDROQUINASE_II"/>
    <property type="match status" value="1"/>
</dbReference>